<dbReference type="EC" id="6.1.1.6" evidence="1"/>
<dbReference type="EMBL" id="CP000688">
    <property type="protein sequence ID" value="ABQ17136.1"/>
    <property type="molecule type" value="Genomic_DNA"/>
</dbReference>
<dbReference type="SMR" id="A5FRN5"/>
<dbReference type="KEGG" id="deb:DehaBAV1_0551"/>
<dbReference type="PATRIC" id="fig|216389.18.peg.597"/>
<dbReference type="HOGENOM" id="CLU_008255_6_0_0"/>
<dbReference type="GO" id="GO:0005829">
    <property type="term" value="C:cytosol"/>
    <property type="evidence" value="ECO:0007669"/>
    <property type="project" value="TreeGrafter"/>
</dbReference>
<dbReference type="GO" id="GO:0005524">
    <property type="term" value="F:ATP binding"/>
    <property type="evidence" value="ECO:0007669"/>
    <property type="project" value="UniProtKB-UniRule"/>
</dbReference>
<dbReference type="GO" id="GO:0004824">
    <property type="term" value="F:lysine-tRNA ligase activity"/>
    <property type="evidence" value="ECO:0007669"/>
    <property type="project" value="UniProtKB-UniRule"/>
</dbReference>
<dbReference type="GO" id="GO:0000287">
    <property type="term" value="F:magnesium ion binding"/>
    <property type="evidence" value="ECO:0007669"/>
    <property type="project" value="UniProtKB-UniRule"/>
</dbReference>
<dbReference type="GO" id="GO:0000049">
    <property type="term" value="F:tRNA binding"/>
    <property type="evidence" value="ECO:0007669"/>
    <property type="project" value="TreeGrafter"/>
</dbReference>
<dbReference type="GO" id="GO:0006430">
    <property type="term" value="P:lysyl-tRNA aminoacylation"/>
    <property type="evidence" value="ECO:0007669"/>
    <property type="project" value="UniProtKB-UniRule"/>
</dbReference>
<dbReference type="CDD" id="cd00775">
    <property type="entry name" value="LysRS_core"/>
    <property type="match status" value="1"/>
</dbReference>
<dbReference type="CDD" id="cd04322">
    <property type="entry name" value="LysRS_N"/>
    <property type="match status" value="1"/>
</dbReference>
<dbReference type="FunFam" id="2.40.50.140:FF:000024">
    <property type="entry name" value="Lysine--tRNA ligase"/>
    <property type="match status" value="1"/>
</dbReference>
<dbReference type="Gene3D" id="3.30.930.10">
    <property type="entry name" value="Bira Bifunctional Protein, Domain 2"/>
    <property type="match status" value="1"/>
</dbReference>
<dbReference type="Gene3D" id="2.40.50.140">
    <property type="entry name" value="Nucleic acid-binding proteins"/>
    <property type="match status" value="1"/>
</dbReference>
<dbReference type="HAMAP" id="MF_00252">
    <property type="entry name" value="Lys_tRNA_synth_class2"/>
    <property type="match status" value="1"/>
</dbReference>
<dbReference type="InterPro" id="IPR004364">
    <property type="entry name" value="Aa-tRNA-synt_II"/>
</dbReference>
<dbReference type="InterPro" id="IPR006195">
    <property type="entry name" value="aa-tRNA-synth_II"/>
</dbReference>
<dbReference type="InterPro" id="IPR045864">
    <property type="entry name" value="aa-tRNA-synth_II/BPL/LPL"/>
</dbReference>
<dbReference type="InterPro" id="IPR002313">
    <property type="entry name" value="Lys-tRNA-ligase_II"/>
</dbReference>
<dbReference type="InterPro" id="IPR044136">
    <property type="entry name" value="Lys-tRNA-ligase_II_N"/>
</dbReference>
<dbReference type="InterPro" id="IPR018149">
    <property type="entry name" value="Lys-tRNA-synth_II_C"/>
</dbReference>
<dbReference type="InterPro" id="IPR012340">
    <property type="entry name" value="NA-bd_OB-fold"/>
</dbReference>
<dbReference type="InterPro" id="IPR004365">
    <property type="entry name" value="NA-bd_OB_tRNA"/>
</dbReference>
<dbReference type="NCBIfam" id="TIGR00499">
    <property type="entry name" value="lysS_bact"/>
    <property type="match status" value="1"/>
</dbReference>
<dbReference type="NCBIfam" id="NF001756">
    <property type="entry name" value="PRK00484.1"/>
    <property type="match status" value="1"/>
</dbReference>
<dbReference type="PANTHER" id="PTHR42918:SF15">
    <property type="entry name" value="LYSINE--TRNA LIGASE, CHLOROPLASTIC_MITOCHONDRIAL"/>
    <property type="match status" value="1"/>
</dbReference>
<dbReference type="PANTHER" id="PTHR42918">
    <property type="entry name" value="LYSYL-TRNA SYNTHETASE"/>
    <property type="match status" value="1"/>
</dbReference>
<dbReference type="Pfam" id="PF00152">
    <property type="entry name" value="tRNA-synt_2"/>
    <property type="match status" value="1"/>
</dbReference>
<dbReference type="Pfam" id="PF01336">
    <property type="entry name" value="tRNA_anti-codon"/>
    <property type="match status" value="1"/>
</dbReference>
<dbReference type="PRINTS" id="PR00982">
    <property type="entry name" value="TRNASYNTHLYS"/>
</dbReference>
<dbReference type="SUPFAM" id="SSF55681">
    <property type="entry name" value="Class II aaRS and biotin synthetases"/>
    <property type="match status" value="1"/>
</dbReference>
<dbReference type="SUPFAM" id="SSF50249">
    <property type="entry name" value="Nucleic acid-binding proteins"/>
    <property type="match status" value="1"/>
</dbReference>
<dbReference type="PROSITE" id="PS50862">
    <property type="entry name" value="AA_TRNA_LIGASE_II"/>
    <property type="match status" value="1"/>
</dbReference>
<protein>
    <recommendedName>
        <fullName evidence="1">Lysine--tRNA ligase</fullName>
        <ecNumber evidence="1">6.1.1.6</ecNumber>
    </recommendedName>
    <alternativeName>
        <fullName evidence="1">Lysyl-tRNA synthetase</fullName>
        <shortName evidence="1">LysRS</shortName>
    </alternativeName>
</protein>
<accession>A5FRN5</accession>
<proteinExistence type="inferred from homology"/>
<evidence type="ECO:0000255" key="1">
    <source>
        <dbReference type="HAMAP-Rule" id="MF_00252"/>
    </source>
</evidence>
<name>SYK_DEHMB</name>
<organism>
    <name type="scientific">Dehalococcoides mccartyi (strain ATCC BAA-2100 / JCM 16839 / KCTC 5957 / BAV1)</name>
    <dbReference type="NCBI Taxonomy" id="216389"/>
    <lineage>
        <taxon>Bacteria</taxon>
        <taxon>Bacillati</taxon>
        <taxon>Chloroflexota</taxon>
        <taxon>Dehalococcoidia</taxon>
        <taxon>Dehalococcoidales</taxon>
        <taxon>Dehalococcoidaceae</taxon>
        <taxon>Dehalococcoides</taxon>
    </lineage>
</organism>
<comment type="catalytic activity">
    <reaction evidence="1">
        <text>tRNA(Lys) + L-lysine + ATP = L-lysyl-tRNA(Lys) + AMP + diphosphate</text>
        <dbReference type="Rhea" id="RHEA:20792"/>
        <dbReference type="Rhea" id="RHEA-COMP:9696"/>
        <dbReference type="Rhea" id="RHEA-COMP:9697"/>
        <dbReference type="ChEBI" id="CHEBI:30616"/>
        <dbReference type="ChEBI" id="CHEBI:32551"/>
        <dbReference type="ChEBI" id="CHEBI:33019"/>
        <dbReference type="ChEBI" id="CHEBI:78442"/>
        <dbReference type="ChEBI" id="CHEBI:78529"/>
        <dbReference type="ChEBI" id="CHEBI:456215"/>
        <dbReference type="EC" id="6.1.1.6"/>
    </reaction>
</comment>
<comment type="cofactor">
    <cofactor evidence="1">
        <name>Mg(2+)</name>
        <dbReference type="ChEBI" id="CHEBI:18420"/>
    </cofactor>
    <text evidence="1">Binds 3 Mg(2+) ions per subunit.</text>
</comment>
<comment type="subunit">
    <text evidence="1">Homodimer.</text>
</comment>
<comment type="subcellular location">
    <subcellularLocation>
        <location evidence="1">Cytoplasm</location>
    </subcellularLocation>
</comment>
<comment type="similarity">
    <text evidence="1">Belongs to the class-II aminoacyl-tRNA synthetase family.</text>
</comment>
<sequence>MPEEYLNAQKMEKLERIKSRGINPYPSTFHPSHTSAQAVALLVEIETQENHLKEVLKLAGRIMTRRDMGKISFMDIRDGSGKMQIFFRQNDLDEASIELLKDLDLGDFIGVEGSLMRTRTGEPSLAATKVSMLSKSLLPLPEKWHGLQDVEKRYRQRYLDLISNADARQTFLTRSRVISVIRAFMNAKGFLEVETPVLQPEAGGALARPFITHHQALNCDFYMRIALELHLKRLIVGGFDRVYEIGRIFRNEGISTRHNPEFTMMESYQAYANYKDVMDFLEEMVSSVVKEISGGYTLPFGDITLDFTPPWPRLTMRDAVKQYAGIDFFDFPTKETLAAEMTRRKLKVDPAKDWGKLVDELVGEFVEPHLVQPTFLTDHPVAMSPLAKQKPEDPRLTERFEAICANMEIANAFSELNDPVEQRARFKEQLEKRSQLRTDESESVDEDFLAALAYGMPPTGGLGVGIDRLVMLFTNHDSIREVILFPALKDREDTKTQE</sequence>
<feature type="chain" id="PRO_1000078500" description="Lysine--tRNA ligase">
    <location>
        <begin position="1"/>
        <end position="498"/>
    </location>
</feature>
<feature type="binding site" evidence="1">
    <location>
        <position position="401"/>
    </location>
    <ligand>
        <name>Mg(2+)</name>
        <dbReference type="ChEBI" id="CHEBI:18420"/>
        <label>1</label>
    </ligand>
</feature>
<feature type="binding site" evidence="1">
    <location>
        <position position="408"/>
    </location>
    <ligand>
        <name>Mg(2+)</name>
        <dbReference type="ChEBI" id="CHEBI:18420"/>
        <label>1</label>
    </ligand>
</feature>
<feature type="binding site" evidence="1">
    <location>
        <position position="408"/>
    </location>
    <ligand>
        <name>Mg(2+)</name>
        <dbReference type="ChEBI" id="CHEBI:18420"/>
        <label>2</label>
    </ligand>
</feature>
<keyword id="KW-0030">Aminoacyl-tRNA synthetase</keyword>
<keyword id="KW-0067">ATP-binding</keyword>
<keyword id="KW-0963">Cytoplasm</keyword>
<keyword id="KW-0436">Ligase</keyword>
<keyword id="KW-0460">Magnesium</keyword>
<keyword id="KW-0479">Metal-binding</keyword>
<keyword id="KW-0547">Nucleotide-binding</keyword>
<keyword id="KW-0648">Protein biosynthesis</keyword>
<reference key="1">
    <citation type="submission" date="2007-05" db="EMBL/GenBank/DDBJ databases">
        <title>Complete sequence of Dehalococcoides sp. BAV1.</title>
        <authorList>
            <consortium name="US DOE Joint Genome Institute"/>
            <person name="Copeland A."/>
            <person name="Lucas S."/>
            <person name="Lapidus A."/>
            <person name="Barry K."/>
            <person name="Detter J.C."/>
            <person name="Glavina del Rio T."/>
            <person name="Hammon N."/>
            <person name="Israni S."/>
            <person name="Pitluck S."/>
            <person name="Lowry S."/>
            <person name="Clum A."/>
            <person name="Schmutz J."/>
            <person name="Larimer F."/>
            <person name="Land M."/>
            <person name="Hauser L."/>
            <person name="Kyrpides N."/>
            <person name="Kim E."/>
            <person name="Ritalahti K.M."/>
            <person name="Loeffler F."/>
            <person name="Richardson P."/>
        </authorList>
    </citation>
    <scope>NUCLEOTIDE SEQUENCE [LARGE SCALE GENOMIC DNA]</scope>
    <source>
        <strain>ATCC BAA-2100 / JCM 16839 / KCTC 5957 / BAV1</strain>
    </source>
</reference>
<gene>
    <name evidence="1" type="primary">lysS</name>
    <name type="ordered locus">DehaBAV1_0551</name>
</gene>